<reference key="1">
    <citation type="journal article" date="2003" name="Science">
        <title>A genomic view of the human-Bacteroides thetaiotaomicron symbiosis.</title>
        <authorList>
            <person name="Xu J."/>
            <person name="Bjursell M.K."/>
            <person name="Himrod J."/>
            <person name="Deng S."/>
            <person name="Carmichael L.K."/>
            <person name="Chiang H.C."/>
            <person name="Hooper L.V."/>
            <person name="Gordon J.I."/>
        </authorList>
    </citation>
    <scope>NUCLEOTIDE SEQUENCE [LARGE SCALE GENOMIC DNA]</scope>
    <source>
        <strain>ATCC 29148 / DSM 2079 / JCM 5827 / CCUG 10774 / NCTC 10582 / VPI-5482 / E50</strain>
    </source>
</reference>
<reference key="2">
    <citation type="journal article" date="2009" name="Proc. Natl. Acad. Sci. U.S.A.">
        <title>Characterizing a model human gut microbiota composed of members of its two dominant bacterial phyla.</title>
        <authorList>
            <person name="Mahowald M.A."/>
            <person name="Rey F.E."/>
            <person name="Seedorf H."/>
            <person name="Turnbaugh P.J."/>
            <person name="Fulton R.S."/>
            <person name="Wollam A."/>
            <person name="Shah N."/>
            <person name="Wang C."/>
            <person name="Magrini V."/>
            <person name="Wilson R.K."/>
            <person name="Cantarel B.L."/>
            <person name="Coutinho P.M."/>
            <person name="Henrissat B."/>
            <person name="Crock L.W."/>
            <person name="Russell A."/>
            <person name="Verberkmoes N.C."/>
            <person name="Hettich R.L."/>
            <person name="Gordon J.I."/>
        </authorList>
    </citation>
    <scope>NUCLEOTIDE SEQUENCE [LARGE SCALE GENOMIC DNA]</scope>
    <source>
        <strain>ATCC 29148 / DSM 2079 / JCM 5827 / CCUG 10774 / NCTC 10582 / VPI-5482 / E50</strain>
    </source>
</reference>
<reference key="3">
    <citation type="journal article" date="2014" name="J. Biol. Chem.">
        <title>Characterization of glycosaminoglycan (GAG) sulfatases from the human gut symbiont Bacteroides thetaiotaomicron reveals the first GAG-specific bacterial endosulfatase.</title>
        <authorList>
            <person name="Ulmer J.E."/>
            <person name="Vilen E.M."/>
            <person name="Namburi R.B."/>
            <person name="Benjdia A."/>
            <person name="Beneteau J."/>
            <person name="Malleron A."/>
            <person name="Bonnaffe D."/>
            <person name="Driguez P.A."/>
            <person name="Descroix K."/>
            <person name="Lassalle G."/>
            <person name="Le Narvor C."/>
            <person name="Sandstroem C."/>
            <person name="Spillmann D."/>
            <person name="Berteau O."/>
        </authorList>
    </citation>
    <scope>FUNCTION</scope>
    <scope>CATALYTIC ACTIVITY</scope>
</reference>
<reference evidence="7" key="4">
    <citation type="submission" date="2016-04" db="PDB data bank">
        <title>Metabolism of host GAGs by the human gut bacterium Bacteroides thetaiotaomicron.</title>
        <authorList>
            <person name="Cartmell A."/>
            <person name="Lowe E.C."/>
            <person name="Basle A."/>
            <person name="Crouch L.I."/>
            <person name="Czjzek M."/>
            <person name="Turnbull J."/>
            <person name="Henrissat B."/>
            <person name="Terrapon N."/>
            <person name="Thomas S."/>
            <person name="Murray H."/>
            <person name="Firbank S.J."/>
            <person name="Bolam D.N."/>
        </authorList>
    </citation>
    <scope>X-RAY CRYSTALLOGRAPHY (1.39 ANGSTROMS) OF 45-558</scope>
</reference>
<protein>
    <recommendedName>
        <fullName evidence="3">N-acetylglucosamine-6-O-sulfatase</fullName>
        <ecNumber evidence="2">3.1.6.-</ecNumber>
    </recommendedName>
</protein>
<feature type="chain" id="PRO_0000446231" description="N-acetylglucosamine-6-O-sulfatase">
    <location>
        <begin position="1"/>
        <end position="558"/>
    </location>
</feature>
<feature type="modified residue" description="3-oxoalanine (Ser)" evidence="1">
    <location>
        <position position="101"/>
    </location>
</feature>
<feature type="strand" evidence="8">
    <location>
        <begin position="54"/>
        <end position="62"/>
    </location>
</feature>
<feature type="helix" evidence="8">
    <location>
        <begin position="65"/>
        <end position="67"/>
    </location>
</feature>
<feature type="helix" evidence="8">
    <location>
        <begin position="69"/>
        <end position="71"/>
    </location>
</feature>
<feature type="helix" evidence="8">
    <location>
        <begin position="79"/>
        <end position="86"/>
    </location>
</feature>
<feature type="strand" evidence="8">
    <location>
        <begin position="88"/>
        <end position="95"/>
    </location>
</feature>
<feature type="helix" evidence="8">
    <location>
        <begin position="101"/>
        <end position="110"/>
    </location>
</feature>
<feature type="helix" evidence="8">
    <location>
        <begin position="114"/>
        <end position="117"/>
    </location>
</feature>
<feature type="helix" evidence="8">
    <location>
        <begin position="133"/>
        <end position="139"/>
    </location>
</feature>
<feature type="strand" evidence="8">
    <location>
        <begin position="143"/>
        <end position="148"/>
    </location>
</feature>
<feature type="strand" evidence="8">
    <location>
        <begin position="160"/>
        <end position="165"/>
    </location>
</feature>
<feature type="helix" evidence="8">
    <location>
        <begin position="168"/>
        <end position="170"/>
    </location>
</feature>
<feature type="strand" evidence="8">
    <location>
        <begin position="174"/>
        <end position="176"/>
    </location>
</feature>
<feature type="strand" evidence="8">
    <location>
        <begin position="178"/>
        <end position="181"/>
    </location>
</feature>
<feature type="strand" evidence="8">
    <location>
        <begin position="184"/>
        <end position="187"/>
    </location>
</feature>
<feature type="helix" evidence="8">
    <location>
        <begin position="192"/>
        <end position="205"/>
    </location>
</feature>
<feature type="strand" evidence="8">
    <location>
        <begin position="213"/>
        <end position="218"/>
    </location>
</feature>
<feature type="helix" evidence="8">
    <location>
        <begin position="230"/>
        <end position="232"/>
    </location>
</feature>
<feature type="turn" evidence="8">
    <location>
        <begin position="233"/>
        <end position="238"/>
    </location>
</feature>
<feature type="turn" evidence="8">
    <location>
        <begin position="245"/>
        <end position="248"/>
    </location>
</feature>
<feature type="helix" evidence="8">
    <location>
        <begin position="256"/>
        <end position="260"/>
    </location>
</feature>
<feature type="turn" evidence="8">
    <location>
        <begin position="265"/>
        <end position="268"/>
    </location>
</feature>
<feature type="turn" evidence="8">
    <location>
        <begin position="271"/>
        <end position="275"/>
    </location>
</feature>
<feature type="helix" evidence="8">
    <location>
        <begin position="280"/>
        <end position="284"/>
    </location>
</feature>
<feature type="helix" evidence="8">
    <location>
        <begin position="290"/>
        <end position="295"/>
    </location>
</feature>
<feature type="helix" evidence="8">
    <location>
        <begin position="300"/>
        <end position="318"/>
    </location>
</feature>
<feature type="helix" evidence="8">
    <location>
        <begin position="324"/>
        <end position="359"/>
    </location>
</feature>
<feature type="strand" evidence="8">
    <location>
        <begin position="366"/>
        <end position="374"/>
    </location>
</feature>
<feature type="helix" evidence="8">
    <location>
        <begin position="380"/>
        <end position="382"/>
    </location>
</feature>
<feature type="strand" evidence="8">
    <location>
        <begin position="388"/>
        <end position="390"/>
    </location>
</feature>
<feature type="helix" evidence="8">
    <location>
        <begin position="391"/>
        <end position="394"/>
    </location>
</feature>
<feature type="strand" evidence="8">
    <location>
        <begin position="398"/>
        <end position="401"/>
    </location>
</feature>
<feature type="turn" evidence="8">
    <location>
        <begin position="403"/>
        <end position="405"/>
    </location>
</feature>
<feature type="strand" evidence="8">
    <location>
        <begin position="410"/>
        <end position="412"/>
    </location>
</feature>
<feature type="helix" evidence="8">
    <location>
        <begin position="418"/>
        <end position="420"/>
    </location>
</feature>
<feature type="helix" evidence="8">
    <location>
        <begin position="421"/>
        <end position="428"/>
    </location>
</feature>
<feature type="helix" evidence="8">
    <location>
        <begin position="443"/>
        <end position="446"/>
    </location>
</feature>
<feature type="turn" evidence="8">
    <location>
        <begin position="447"/>
        <end position="450"/>
    </location>
</feature>
<feature type="strand" evidence="8">
    <location>
        <begin position="460"/>
        <end position="464"/>
    </location>
</feature>
<feature type="strand" evidence="8">
    <location>
        <begin position="475"/>
        <end position="480"/>
    </location>
</feature>
<feature type="strand" evidence="8">
    <location>
        <begin position="482"/>
        <end position="492"/>
    </location>
</feature>
<feature type="strand" evidence="8">
    <location>
        <begin position="495"/>
        <end position="500"/>
    </location>
</feature>
<feature type="turn" evidence="8">
    <location>
        <begin position="501"/>
        <end position="503"/>
    </location>
</feature>
<feature type="helix" evidence="8">
    <location>
        <begin position="515"/>
        <end position="517"/>
    </location>
</feature>
<feature type="helix" evidence="8">
    <location>
        <begin position="518"/>
        <end position="534"/>
    </location>
</feature>
<sequence length="558" mass="64585">MPATEKASAPHWSFLSSDVISIMKSNPSTLLLPLAALSLASCANPQKEETKRPNIIFMMTDDHTTQAMSCYGGNLIQTPNMDRIANEGIRFDNCYAVNALSGPSRACILTGKFSHENGFTDNASTFNGDQQTFPKLLQQAGYQTAMIGKWHLISEPQGFDHWSILSGQHEQGDYYDPDFWEDGKHIVEKGYATDIITDKAINFLENRDKNKPFCMMYHQKAPHRNWMPAPRHLGIFNNTIFPEPANLFDDYEGRGKAAREQDMSIEHTLTNDWDLKLLTREEMLKDTTNRLYSVYKRMPSEVQDKWDSAYAQRIAEYRKGDLKGKALISWKYQQYMRDYLATVLAVDENIGRLLNYLEKIGELDNTIIVYTSDQGFFLGEHGWFDKRFMYEECQRMPLIIRYPKAIKAGSTSSAISMNVDFAPTFLDFAGVEVPSDIQGASLKPVLENEGKTPADWRKAAYYHYYEYPAEHSVKRHYGIRTQDFKLIHFYNDIDEWEMYDMKADPREMNNIFGKAEYAKKQKELMQLLEETQKQYKDNDPDEKETVLFKGDRRLMENR</sequence>
<gene>
    <name evidence="6" type="ordered locus">BT_4656</name>
</gene>
<name>GLCSF_BACTN</name>
<dbReference type="EC" id="3.1.6.-" evidence="2"/>
<dbReference type="EMBL" id="AE015928">
    <property type="protein sequence ID" value="AAO79761.1"/>
    <property type="molecule type" value="Genomic_DNA"/>
</dbReference>
<dbReference type="RefSeq" id="NP_813567.1">
    <property type="nucleotide sequence ID" value="NC_004663.1"/>
</dbReference>
<dbReference type="PDB" id="5G2V">
    <property type="method" value="X-ray"/>
    <property type="resolution" value="1.39 A"/>
    <property type="chains" value="A=45-558"/>
</dbReference>
<dbReference type="PDBsum" id="5G2V"/>
<dbReference type="SMR" id="Q89YS5"/>
<dbReference type="STRING" id="226186.BT_4656"/>
<dbReference type="PaxDb" id="226186-BT_4656"/>
<dbReference type="EnsemblBacteria" id="AAO79761">
    <property type="protein sequence ID" value="AAO79761"/>
    <property type="gene ID" value="BT_4656"/>
</dbReference>
<dbReference type="KEGG" id="bth:BT_4656"/>
<dbReference type="PATRIC" id="fig|226186.12.peg.4737"/>
<dbReference type="eggNOG" id="COG3119">
    <property type="taxonomic scope" value="Bacteria"/>
</dbReference>
<dbReference type="HOGENOM" id="CLU_006332_9_3_10"/>
<dbReference type="InParanoid" id="Q89YS5"/>
<dbReference type="OrthoDB" id="9765065at2"/>
<dbReference type="Proteomes" id="UP000001414">
    <property type="component" value="Chromosome"/>
</dbReference>
<dbReference type="GO" id="GO:0016787">
    <property type="term" value="F:hydrolase activity"/>
    <property type="evidence" value="ECO:0007669"/>
    <property type="project" value="UniProtKB-KW"/>
</dbReference>
<dbReference type="CDD" id="cd16031">
    <property type="entry name" value="G6S_like"/>
    <property type="match status" value="1"/>
</dbReference>
<dbReference type="Gene3D" id="3.40.720.10">
    <property type="entry name" value="Alkaline Phosphatase, subunit A"/>
    <property type="match status" value="1"/>
</dbReference>
<dbReference type="InterPro" id="IPR017850">
    <property type="entry name" value="Alkaline_phosphatase_core_sf"/>
</dbReference>
<dbReference type="InterPro" id="IPR002591">
    <property type="entry name" value="Phosphodiest/P_Trfase"/>
</dbReference>
<dbReference type="InterPro" id="IPR032506">
    <property type="entry name" value="SGSH_C"/>
</dbReference>
<dbReference type="InterPro" id="IPR024607">
    <property type="entry name" value="Sulfatase_CS"/>
</dbReference>
<dbReference type="PANTHER" id="PTHR43108">
    <property type="entry name" value="N-ACETYLGLUCOSAMINE-6-SULFATASE FAMILY MEMBER"/>
    <property type="match status" value="1"/>
</dbReference>
<dbReference type="PANTHER" id="PTHR43108:SF6">
    <property type="entry name" value="N-SULPHOGLUCOSAMINE SULPHOHYDROLASE"/>
    <property type="match status" value="1"/>
</dbReference>
<dbReference type="Pfam" id="PF01663">
    <property type="entry name" value="Phosphodiest"/>
    <property type="match status" value="1"/>
</dbReference>
<dbReference type="Pfam" id="PF16347">
    <property type="entry name" value="SGSH_C"/>
    <property type="match status" value="1"/>
</dbReference>
<dbReference type="SUPFAM" id="SSF53649">
    <property type="entry name" value="Alkaline phosphatase-like"/>
    <property type="match status" value="1"/>
</dbReference>
<dbReference type="PROSITE" id="PS00523">
    <property type="entry name" value="SULFATASE_1"/>
    <property type="match status" value="1"/>
</dbReference>
<dbReference type="PROSITE" id="PS00149">
    <property type="entry name" value="SULFATASE_2"/>
    <property type="match status" value="1"/>
</dbReference>
<organism>
    <name type="scientific">Bacteroides thetaiotaomicron (strain ATCC 29148 / DSM 2079 / JCM 5827 / CCUG 10774 / NCTC 10582 / VPI-5482 / E50)</name>
    <dbReference type="NCBI Taxonomy" id="226186"/>
    <lineage>
        <taxon>Bacteria</taxon>
        <taxon>Pseudomonadati</taxon>
        <taxon>Bacteroidota</taxon>
        <taxon>Bacteroidia</taxon>
        <taxon>Bacteroidales</taxon>
        <taxon>Bacteroidaceae</taxon>
        <taxon>Bacteroides</taxon>
    </lineage>
</organism>
<proteinExistence type="evidence at protein level"/>
<keyword id="KW-0002">3D-structure</keyword>
<keyword id="KW-0378">Hydrolase</keyword>
<keyword id="KW-1185">Reference proteome</keyword>
<accession>Q89YS5</accession>
<comment type="function">
    <text evidence="2 5">Exosulfatase involved in the degradation of the glycosaminoglycan (GAG) heparan sulfate (HS). Catalyzes the hydrolysis of the 6-sulfate groups of the N-acetyl-D-glucosamine 6-sulfate units (PubMed:25002587). GAG-specific sulfatases play a key role in the persistence of the major human gut symbiont B.thetaiotaomicron in the host gastrointestinal tract (PubMed:25002587).</text>
</comment>
<comment type="PTM">
    <text evidence="1">The conversion to 3-oxoalanine (also known as C-formylglycine, FGly), of a serine or cysteine residue in prokaryotes and of a cysteine residue in eukaryotes, is critical for catalytic activity.</text>
</comment>
<comment type="similarity">
    <text evidence="4">Belongs to the sulfatase family.</text>
</comment>
<evidence type="ECO:0000250" key="1">
    <source>
        <dbReference type="UniProtKB" id="Q9X759"/>
    </source>
</evidence>
<evidence type="ECO:0000269" key="2">
    <source>
    </source>
</evidence>
<evidence type="ECO:0000303" key="3">
    <source>
    </source>
</evidence>
<evidence type="ECO:0000305" key="4"/>
<evidence type="ECO:0000305" key="5">
    <source>
    </source>
</evidence>
<evidence type="ECO:0000312" key="6">
    <source>
        <dbReference type="EMBL" id="AAO79761.1"/>
    </source>
</evidence>
<evidence type="ECO:0007744" key="7">
    <source>
        <dbReference type="PDB" id="5G2V"/>
    </source>
</evidence>
<evidence type="ECO:0007829" key="8">
    <source>
        <dbReference type="PDB" id="5G2V"/>
    </source>
</evidence>